<accession>Q0AWG2</accession>
<comment type="function">
    <text evidence="1">Nucleoside triphosphate pyrophosphatase that hydrolyzes dTTP and UTP. May have a dual role in cell division arrest and in preventing the incorporation of modified nucleotides into cellular nucleic acids.</text>
</comment>
<comment type="catalytic activity">
    <reaction evidence="1">
        <text>dTTP + H2O = dTMP + diphosphate + H(+)</text>
        <dbReference type="Rhea" id="RHEA:28534"/>
        <dbReference type="ChEBI" id="CHEBI:15377"/>
        <dbReference type="ChEBI" id="CHEBI:15378"/>
        <dbReference type="ChEBI" id="CHEBI:33019"/>
        <dbReference type="ChEBI" id="CHEBI:37568"/>
        <dbReference type="ChEBI" id="CHEBI:63528"/>
        <dbReference type="EC" id="3.6.1.9"/>
    </reaction>
</comment>
<comment type="catalytic activity">
    <reaction evidence="1">
        <text>UTP + H2O = UMP + diphosphate + H(+)</text>
        <dbReference type="Rhea" id="RHEA:29395"/>
        <dbReference type="ChEBI" id="CHEBI:15377"/>
        <dbReference type="ChEBI" id="CHEBI:15378"/>
        <dbReference type="ChEBI" id="CHEBI:33019"/>
        <dbReference type="ChEBI" id="CHEBI:46398"/>
        <dbReference type="ChEBI" id="CHEBI:57865"/>
        <dbReference type="EC" id="3.6.1.9"/>
    </reaction>
</comment>
<comment type="cofactor">
    <cofactor evidence="1">
        <name>a divalent metal cation</name>
        <dbReference type="ChEBI" id="CHEBI:60240"/>
    </cofactor>
</comment>
<comment type="subcellular location">
    <subcellularLocation>
        <location evidence="1">Cytoplasm</location>
    </subcellularLocation>
</comment>
<comment type="similarity">
    <text evidence="1">Belongs to the Maf family. YhdE subfamily.</text>
</comment>
<name>NTPPA_SYNWW</name>
<feature type="chain" id="PRO_0000267451" description="dTTP/UTP pyrophosphatase">
    <location>
        <begin position="1"/>
        <end position="189"/>
    </location>
</feature>
<feature type="active site" description="Proton acceptor" evidence="1">
    <location>
        <position position="64"/>
    </location>
</feature>
<feature type="site" description="Important for substrate specificity" evidence="1">
    <location>
        <position position="7"/>
    </location>
</feature>
<feature type="site" description="Important for substrate specificity" evidence="1">
    <location>
        <position position="65"/>
    </location>
</feature>
<feature type="site" description="Important for substrate specificity" evidence="1">
    <location>
        <position position="149"/>
    </location>
</feature>
<proteinExistence type="inferred from homology"/>
<gene>
    <name type="ordered locus">Swol_1643</name>
</gene>
<protein>
    <recommendedName>
        <fullName evidence="1">dTTP/UTP pyrophosphatase</fullName>
        <shortName evidence="1">dTTPase/UTPase</shortName>
        <ecNumber evidence="1">3.6.1.9</ecNumber>
    </recommendedName>
    <alternativeName>
        <fullName evidence="1">Nucleoside triphosphate pyrophosphatase</fullName>
    </alternativeName>
    <alternativeName>
        <fullName evidence="1">Nucleotide pyrophosphatase</fullName>
        <shortName evidence="1">Nucleotide PPase</shortName>
    </alternativeName>
</protein>
<evidence type="ECO:0000255" key="1">
    <source>
        <dbReference type="HAMAP-Rule" id="MF_00528"/>
    </source>
</evidence>
<sequence>MASASPRRQDLLDALGIKYKSVPAELDEHFFPGELPRKAAERVAREKAEAVARNFEHGLILAADTIVVCDGKVLGKPQDEDDAFLMLSHLSGKSHEVITAVCIKDIDQAESEVESEVTRVYFRSLSPMEIRTYISSGEAMDKAGAYGIQGLGSVFVERIDGCYFNVVGLPISRVYGMLARRGTNILRNE</sequence>
<dbReference type="EC" id="3.6.1.9" evidence="1"/>
<dbReference type="EMBL" id="CP000448">
    <property type="protein sequence ID" value="ABI68942.1"/>
    <property type="molecule type" value="Genomic_DNA"/>
</dbReference>
<dbReference type="SMR" id="Q0AWG2"/>
<dbReference type="STRING" id="335541.Swol_1643"/>
<dbReference type="KEGG" id="swo:Swol_1643"/>
<dbReference type="eggNOG" id="COG0424">
    <property type="taxonomic scope" value="Bacteria"/>
</dbReference>
<dbReference type="HOGENOM" id="CLU_040416_0_0_9"/>
<dbReference type="Proteomes" id="UP000001968">
    <property type="component" value="Chromosome"/>
</dbReference>
<dbReference type="GO" id="GO:0005737">
    <property type="term" value="C:cytoplasm"/>
    <property type="evidence" value="ECO:0007669"/>
    <property type="project" value="UniProtKB-SubCell"/>
</dbReference>
<dbReference type="GO" id="GO:0036218">
    <property type="term" value="F:dTTP diphosphatase activity"/>
    <property type="evidence" value="ECO:0007669"/>
    <property type="project" value="RHEA"/>
</dbReference>
<dbReference type="GO" id="GO:0036221">
    <property type="term" value="F:UTP diphosphatase activity"/>
    <property type="evidence" value="ECO:0007669"/>
    <property type="project" value="RHEA"/>
</dbReference>
<dbReference type="GO" id="GO:0009117">
    <property type="term" value="P:nucleotide metabolic process"/>
    <property type="evidence" value="ECO:0007669"/>
    <property type="project" value="UniProtKB-KW"/>
</dbReference>
<dbReference type="CDD" id="cd00555">
    <property type="entry name" value="Maf"/>
    <property type="match status" value="1"/>
</dbReference>
<dbReference type="FunFam" id="3.90.950.10:FF:000005">
    <property type="entry name" value="7-methyl-GTP pyrophosphatase"/>
    <property type="match status" value="1"/>
</dbReference>
<dbReference type="Gene3D" id="3.90.950.10">
    <property type="match status" value="1"/>
</dbReference>
<dbReference type="HAMAP" id="MF_00528">
    <property type="entry name" value="Maf"/>
    <property type="match status" value="1"/>
</dbReference>
<dbReference type="InterPro" id="IPR029001">
    <property type="entry name" value="ITPase-like_fam"/>
</dbReference>
<dbReference type="InterPro" id="IPR003697">
    <property type="entry name" value="Maf-like"/>
</dbReference>
<dbReference type="NCBIfam" id="TIGR00172">
    <property type="entry name" value="maf"/>
    <property type="match status" value="1"/>
</dbReference>
<dbReference type="PANTHER" id="PTHR43213">
    <property type="entry name" value="BIFUNCTIONAL DTTP/UTP PYROPHOSPHATASE/METHYLTRANSFERASE PROTEIN-RELATED"/>
    <property type="match status" value="1"/>
</dbReference>
<dbReference type="PANTHER" id="PTHR43213:SF5">
    <property type="entry name" value="BIFUNCTIONAL DTTP_UTP PYROPHOSPHATASE_METHYLTRANSFERASE PROTEIN-RELATED"/>
    <property type="match status" value="1"/>
</dbReference>
<dbReference type="Pfam" id="PF02545">
    <property type="entry name" value="Maf"/>
    <property type="match status" value="1"/>
</dbReference>
<dbReference type="PIRSF" id="PIRSF006305">
    <property type="entry name" value="Maf"/>
    <property type="match status" value="1"/>
</dbReference>
<dbReference type="SUPFAM" id="SSF52972">
    <property type="entry name" value="ITPase-like"/>
    <property type="match status" value="1"/>
</dbReference>
<organism>
    <name type="scientific">Syntrophomonas wolfei subsp. wolfei (strain DSM 2245B / Goettingen)</name>
    <dbReference type="NCBI Taxonomy" id="335541"/>
    <lineage>
        <taxon>Bacteria</taxon>
        <taxon>Bacillati</taxon>
        <taxon>Bacillota</taxon>
        <taxon>Clostridia</taxon>
        <taxon>Eubacteriales</taxon>
        <taxon>Syntrophomonadaceae</taxon>
        <taxon>Syntrophomonas</taxon>
    </lineage>
</organism>
<keyword id="KW-0963">Cytoplasm</keyword>
<keyword id="KW-0378">Hydrolase</keyword>
<keyword id="KW-0546">Nucleotide metabolism</keyword>
<keyword id="KW-1185">Reference proteome</keyword>
<reference key="1">
    <citation type="journal article" date="2010" name="Environ. Microbiol.">
        <title>The genome of Syntrophomonas wolfei: new insights into syntrophic metabolism and biohydrogen production.</title>
        <authorList>
            <person name="Sieber J.R."/>
            <person name="Sims D.R."/>
            <person name="Han C."/>
            <person name="Kim E."/>
            <person name="Lykidis A."/>
            <person name="Lapidus A.L."/>
            <person name="McDonnald E."/>
            <person name="Rohlin L."/>
            <person name="Culley D.E."/>
            <person name="Gunsalus R."/>
            <person name="McInerney M.J."/>
        </authorList>
    </citation>
    <scope>NUCLEOTIDE SEQUENCE [LARGE SCALE GENOMIC DNA]</scope>
    <source>
        <strain>DSM 2245B / Goettingen</strain>
    </source>
</reference>